<evidence type="ECO:0000255" key="1">
    <source>
        <dbReference type="PROSITE-ProRule" id="PRU00175"/>
    </source>
</evidence>
<evidence type="ECO:0000256" key="2">
    <source>
        <dbReference type="SAM" id="MobiDB-lite"/>
    </source>
</evidence>
<evidence type="ECO:0000269" key="3">
    <source>
    </source>
</evidence>
<evidence type="ECO:0000305" key="4"/>
<reference key="1">
    <citation type="journal article" date="2010" name="Mol. Biotechnol.">
        <title>Characterization and promoter analysis of a cotton RING-type ubiquitin ligase (E3) gene.</title>
        <authorList>
            <person name="Ho M.-H."/>
            <person name="Saha S."/>
            <person name="Jenkins J.N."/>
            <person name="Ma D.-P."/>
        </authorList>
    </citation>
    <scope>NUCLEOTIDE SEQUENCE [GENOMIC DNA / MRNA]</scope>
    <scope>FUNCTION</scope>
    <scope>AUTOUBIQUITINATION</scope>
    <scope>TISSUE SPECIFICITY</scope>
    <scope>DEVELOPMENTAL STAGE</scope>
    <source>
        <strain>cv. Sure-Grow 747</strain>
        <tissue>Fiber</tissue>
    </source>
</reference>
<reference key="2">
    <citation type="submission" date="2005-11" db="EMBL/GenBank/DDBJ databases">
        <title>ESTs from immature ovule (-3 to 3 DPA) of G. hirsutum TM-1.</title>
        <authorList>
            <person name="Yang S.S."/>
            <person name="Cheung F."/>
            <person name="Wei N.E."/>
            <person name="Lee J.J."/>
            <person name="Ha M."/>
            <person name="Stelly D.M."/>
            <person name="Thaxton P."/>
            <person name="Sze S.H."/>
            <person name="Triplett B.A."/>
            <person name="Town C.D."/>
            <person name="Chen Z.J."/>
        </authorList>
    </citation>
    <scope>NUCLEOTIDE SEQUENCE [LARGE SCALE MRNA] OF 1-315</scope>
    <source>
        <strain>cv. Texas Marker 1</strain>
        <tissue>Ovule</tissue>
    </source>
</reference>
<feature type="chain" id="PRO_0000396834" description="E3 ubiquitin-protein ligase RING1">
    <location>
        <begin position="1"/>
        <end position="338"/>
    </location>
</feature>
<feature type="zinc finger region" description="RING-type; atypical" evidence="1">
    <location>
        <begin position="224"/>
        <end position="265"/>
    </location>
</feature>
<feature type="region of interest" description="Disordered" evidence="2">
    <location>
        <begin position="102"/>
        <end position="124"/>
    </location>
</feature>
<feature type="region of interest" description="Disordered" evidence="2">
    <location>
        <begin position="267"/>
        <end position="338"/>
    </location>
</feature>
<feature type="compositionally biased region" description="Polar residues" evidence="2">
    <location>
        <begin position="110"/>
        <end position="121"/>
    </location>
</feature>
<feature type="compositionally biased region" description="Basic and acidic residues" evidence="2">
    <location>
        <begin position="267"/>
        <end position="279"/>
    </location>
</feature>
<feature type="compositionally biased region" description="Basic and acidic residues" evidence="2">
    <location>
        <begin position="298"/>
        <end position="309"/>
    </location>
</feature>
<feature type="sequence conflict" description="In Ref. 2; DT559682." evidence="4" ref="2">
    <original>V</original>
    <variation>I</variation>
    <location>
        <position position="34"/>
    </location>
</feature>
<feature type="sequence conflict" description="In Ref. 2; DT559682." evidence="4" ref="2">
    <original>L</original>
    <variation>P</variation>
    <location>
        <position position="80"/>
    </location>
</feature>
<feature type="sequence conflict" description="In Ref. 2; DT559682." evidence="4" ref="2">
    <original>G</original>
    <variation>R</variation>
    <location>
        <position position="284"/>
    </location>
</feature>
<comment type="function">
    <text evidence="3">E3 ubiquitin-protein ligase which accepts ubiquitin from an E2 ubiquitin-conjugating enzyme in the form of a thioester and then directly transfers the ubiquitin to targeted substrates. Promotes polyubiquitination of target proteins.</text>
</comment>
<comment type="catalytic activity">
    <reaction>
        <text>S-ubiquitinyl-[E2 ubiquitin-conjugating enzyme]-L-cysteine + [acceptor protein]-L-lysine = [E2 ubiquitin-conjugating enzyme]-L-cysteine + N(6)-ubiquitinyl-[acceptor protein]-L-lysine.</text>
        <dbReference type="EC" id="2.3.2.27"/>
    </reaction>
</comment>
<comment type="pathway">
    <text>Protein modification; protein ubiquitination.</text>
</comment>
<comment type="tissue specificity">
    <text evidence="3">Mostly expressed in cotton fibers, and, to a lower extent, in leaves and flowers.</text>
</comment>
<comment type="developmental stage">
    <text evidence="3">Accumulates progressively in fiber during their elongation and reach highest levels at 15 days post-anthesis (DPA).</text>
</comment>
<comment type="PTM">
    <text evidence="3">Auto-ubiquitinated as part of the enzymatic reaction.</text>
</comment>
<name>RING1_GOSHI</name>
<protein>
    <recommendedName>
        <fullName>E3 ubiquitin-protein ligase RING1</fullName>
        <ecNumber>2.3.2.27</ecNumber>
    </recommendedName>
    <alternativeName>
        <fullName>RING finger protein 1</fullName>
    </alternativeName>
    <alternativeName>
        <fullName evidence="4">RING-type E3 ubiquitin transferase RING1</fullName>
    </alternativeName>
</protein>
<gene>
    <name type="primary">RING1</name>
</gene>
<dbReference type="EC" id="2.3.2.27"/>
<dbReference type="EMBL" id="GU229884">
    <property type="protein sequence ID" value="ADI58769.1"/>
    <property type="molecule type" value="Genomic_DNA"/>
</dbReference>
<dbReference type="EMBL" id="DT559682">
    <property type="status" value="NOT_ANNOTATED_CDS"/>
    <property type="molecule type" value="mRNA"/>
</dbReference>
<dbReference type="SMR" id="P0CH30"/>
<dbReference type="STRING" id="3635.P0CH30"/>
<dbReference type="PaxDb" id="3635-P0CH30"/>
<dbReference type="UniPathway" id="UPA00143"/>
<dbReference type="Proteomes" id="UP000189702">
    <property type="component" value="Unplaced"/>
</dbReference>
<dbReference type="GO" id="GO:0005737">
    <property type="term" value="C:cytoplasm"/>
    <property type="evidence" value="ECO:0000318"/>
    <property type="project" value="GO_Central"/>
</dbReference>
<dbReference type="GO" id="GO:0061630">
    <property type="term" value="F:ubiquitin protein ligase activity"/>
    <property type="evidence" value="ECO:0000318"/>
    <property type="project" value="GO_Central"/>
</dbReference>
<dbReference type="GO" id="GO:0004842">
    <property type="term" value="F:ubiquitin-protein transferase activity"/>
    <property type="evidence" value="ECO:0000314"/>
    <property type="project" value="AgBase"/>
</dbReference>
<dbReference type="GO" id="GO:0008270">
    <property type="term" value="F:zinc ion binding"/>
    <property type="evidence" value="ECO:0007669"/>
    <property type="project" value="UniProtKB-KW"/>
</dbReference>
<dbReference type="GO" id="GO:0016567">
    <property type="term" value="P:protein ubiquitination"/>
    <property type="evidence" value="ECO:0000318"/>
    <property type="project" value="GO_Central"/>
</dbReference>
<dbReference type="GO" id="GO:0090378">
    <property type="term" value="P:seed trichome elongation"/>
    <property type="evidence" value="ECO:0000270"/>
    <property type="project" value="AgBase"/>
</dbReference>
<dbReference type="CDD" id="cd16667">
    <property type="entry name" value="RING-H2_RNF126-like"/>
    <property type="match status" value="1"/>
</dbReference>
<dbReference type="FunFam" id="3.30.40.10:FF:000022">
    <property type="entry name" value="E3 ubiquitin-protein ligase RING1-like"/>
    <property type="match status" value="1"/>
</dbReference>
<dbReference type="Gene3D" id="3.30.40.10">
    <property type="entry name" value="Zinc/RING finger domain, C3HC4 (zinc finger)"/>
    <property type="match status" value="1"/>
</dbReference>
<dbReference type="InterPro" id="IPR039525">
    <property type="entry name" value="RNF126-like_zinc-ribbon"/>
</dbReference>
<dbReference type="InterPro" id="IPR001841">
    <property type="entry name" value="Znf_RING"/>
</dbReference>
<dbReference type="InterPro" id="IPR013083">
    <property type="entry name" value="Znf_RING/FYVE/PHD"/>
</dbReference>
<dbReference type="PANTHER" id="PTHR15710">
    <property type="entry name" value="E3 UBIQUITIN-PROTEIN LIGASE PRAJA"/>
    <property type="match status" value="1"/>
</dbReference>
<dbReference type="PANTHER" id="PTHR15710:SF208">
    <property type="entry name" value="E3 UBIQUITIN-PROTEIN LIGASE RING1-LIKE"/>
    <property type="match status" value="1"/>
</dbReference>
<dbReference type="Pfam" id="PF13639">
    <property type="entry name" value="zf-RING_2"/>
    <property type="match status" value="1"/>
</dbReference>
<dbReference type="Pfam" id="PF14369">
    <property type="entry name" value="Zn_ribbon_19"/>
    <property type="match status" value="1"/>
</dbReference>
<dbReference type="SMART" id="SM00184">
    <property type="entry name" value="RING"/>
    <property type="match status" value="1"/>
</dbReference>
<dbReference type="SUPFAM" id="SSF57850">
    <property type="entry name" value="RING/U-box"/>
    <property type="match status" value="1"/>
</dbReference>
<dbReference type="PROSITE" id="PS50089">
    <property type="entry name" value="ZF_RING_2"/>
    <property type="match status" value="1"/>
</dbReference>
<sequence length="338" mass="36701">MSSDGNVTGGGGANTVGVTNKPFFCYQCNRTVNVTISPPSSDPTCPICNEGFLEEYDNPNPNQGSGFLNPNPNSIPFHDLFLTLSDPFASLLPLLFPSSSSTTTSSSASIDPNNPSLSGPTRSGRGDPFAFDPFTFIQNHLNDLRSSGAQIEFVIQNNPSDQGFRLPANIGDYFIGPGLEQLIQQLAENDPNRYGTPPASKSAIEALPLVNITKSNLNSEFNQCAVCMDDFEEGTEAKQMPCKHLYHKDCLLPWLELHNSCPVCRHELPTDDPDYERRVRGAQGTSGGNDGDNSGQRSDGDNRTVERSFRISLPWPFQARGPGPAPGDNAETRQEDLD</sequence>
<accession>P0CH30</accession>
<accession>D7PC81</accession>
<keyword id="KW-0479">Metal-binding</keyword>
<keyword id="KW-1185">Reference proteome</keyword>
<keyword id="KW-0808">Transferase</keyword>
<keyword id="KW-0832">Ubl conjugation</keyword>
<keyword id="KW-0833">Ubl conjugation pathway</keyword>
<keyword id="KW-0862">Zinc</keyword>
<keyword id="KW-0863">Zinc-finger</keyword>
<organism>
    <name type="scientific">Gossypium hirsutum</name>
    <name type="common">Upland cotton</name>
    <name type="synonym">Gossypium mexicanum</name>
    <dbReference type="NCBI Taxonomy" id="3635"/>
    <lineage>
        <taxon>Eukaryota</taxon>
        <taxon>Viridiplantae</taxon>
        <taxon>Streptophyta</taxon>
        <taxon>Embryophyta</taxon>
        <taxon>Tracheophyta</taxon>
        <taxon>Spermatophyta</taxon>
        <taxon>Magnoliopsida</taxon>
        <taxon>eudicotyledons</taxon>
        <taxon>Gunneridae</taxon>
        <taxon>Pentapetalae</taxon>
        <taxon>rosids</taxon>
        <taxon>malvids</taxon>
        <taxon>Malvales</taxon>
        <taxon>Malvaceae</taxon>
        <taxon>Malvoideae</taxon>
        <taxon>Gossypium</taxon>
    </lineage>
</organism>
<proteinExistence type="evidence at protein level"/>